<name>DB119_HYLLA</name>
<keyword id="KW-0025">Alternative splicing</keyword>
<keyword id="KW-0044">Antibiotic</keyword>
<keyword id="KW-0929">Antimicrobial</keyword>
<keyword id="KW-0211">Defensin</keyword>
<keyword id="KW-1015">Disulfide bond</keyword>
<keyword id="KW-0964">Secreted</keyword>
<keyword id="KW-0732">Signal</keyword>
<sequence>MKLLYLFLAILLAIEEPVISGKHHILRCMGNSGICRASCKKNEQPYLYCRNYQHCCLQSYMRISISGEEENTDWSYEKQWPRLP</sequence>
<organism>
    <name type="scientific">Hylobates lar</name>
    <name type="common">Lar gibbon</name>
    <name type="synonym">White-handed gibbon</name>
    <dbReference type="NCBI Taxonomy" id="9580"/>
    <lineage>
        <taxon>Eukaryota</taxon>
        <taxon>Metazoa</taxon>
        <taxon>Chordata</taxon>
        <taxon>Craniata</taxon>
        <taxon>Vertebrata</taxon>
        <taxon>Euteleostomi</taxon>
        <taxon>Mammalia</taxon>
        <taxon>Eutheria</taxon>
        <taxon>Euarchontoglires</taxon>
        <taxon>Primates</taxon>
        <taxon>Haplorrhini</taxon>
        <taxon>Catarrhini</taxon>
        <taxon>Hylobatidae</taxon>
        <taxon>Hylobates</taxon>
    </lineage>
</organism>
<protein>
    <recommendedName>
        <fullName>Beta-defensin 119</fullName>
    </recommendedName>
    <alternativeName>
        <fullName>Beta-defensin 120</fullName>
    </alternativeName>
    <alternativeName>
        <fullName>Defensin, beta 119</fullName>
    </alternativeName>
    <alternativeName>
        <fullName>Defensin, beta 120</fullName>
    </alternativeName>
</protein>
<evidence type="ECO:0000250" key="1"/>
<evidence type="ECO:0000255" key="2"/>
<evidence type="ECO:0000305" key="3"/>
<accession>A4H227</accession>
<accession>A4H232</accession>
<dbReference type="EMBL" id="AM410132">
    <property type="protein sequence ID" value="CAL68947.1"/>
    <property type="molecule type" value="Genomic_DNA"/>
</dbReference>
<dbReference type="EMBL" id="AM410137">
    <property type="protein sequence ID" value="CAL68952.1"/>
    <property type="molecule type" value="Genomic_DNA"/>
</dbReference>
<dbReference type="GO" id="GO:0005576">
    <property type="term" value="C:extracellular region"/>
    <property type="evidence" value="ECO:0007669"/>
    <property type="project" value="UniProtKB-SubCell"/>
</dbReference>
<dbReference type="GO" id="GO:0001530">
    <property type="term" value="F:lipopolysaccharide binding"/>
    <property type="evidence" value="ECO:0007669"/>
    <property type="project" value="TreeGrafter"/>
</dbReference>
<dbReference type="GO" id="GO:0061760">
    <property type="term" value="P:antifungal innate immune response"/>
    <property type="evidence" value="ECO:0007669"/>
    <property type="project" value="TreeGrafter"/>
</dbReference>
<dbReference type="GO" id="GO:0050829">
    <property type="term" value="P:defense response to Gram-negative bacterium"/>
    <property type="evidence" value="ECO:0007669"/>
    <property type="project" value="InterPro"/>
</dbReference>
<dbReference type="GO" id="GO:0050830">
    <property type="term" value="P:defense response to Gram-positive bacterium"/>
    <property type="evidence" value="ECO:0007669"/>
    <property type="project" value="InterPro"/>
</dbReference>
<dbReference type="InterPro" id="IPR028060">
    <property type="entry name" value="Defensin_big_dom"/>
</dbReference>
<dbReference type="PANTHER" id="PTHR47902">
    <property type="entry name" value="BETA-DEFENSIN 119"/>
    <property type="match status" value="1"/>
</dbReference>
<dbReference type="PANTHER" id="PTHR47902:SF1">
    <property type="entry name" value="BETA-DEFENSIN 119"/>
    <property type="match status" value="1"/>
</dbReference>
<dbReference type="Pfam" id="PF14862">
    <property type="entry name" value="Defensin_big"/>
    <property type="match status" value="1"/>
</dbReference>
<comment type="function">
    <text evidence="3">Has antibacterial activity.</text>
</comment>
<comment type="subcellular location">
    <subcellularLocation>
        <location evidence="3">Secreted</location>
    </subcellularLocation>
</comment>
<comment type="alternative products">
    <event type="alternative splicing"/>
    <isoform>
        <id>A4H227-1</id>
        <name>1</name>
        <sequence type="displayed"/>
    </isoform>
    <isoform>
        <id>A4H227-2</id>
        <name>2</name>
        <sequence type="described" ref="VSP_029872"/>
    </isoform>
</comment>
<comment type="similarity">
    <text evidence="3">Belongs to the beta-defensin family.</text>
</comment>
<gene>
    <name type="primary">DEFB119</name>
    <name type="synonym">DEFB120</name>
</gene>
<proteinExistence type="inferred from homology"/>
<reference key="1">
    <citation type="submission" date="2006-11" db="EMBL/GenBank/DDBJ databases">
        <title>Evolution and sequence variation of human beta-defensin genes.</title>
        <authorList>
            <person name="Hollox E.J."/>
            <person name="Armour J.A.L."/>
        </authorList>
    </citation>
    <scope>NUCLEOTIDE SEQUENCE [GENOMIC DNA] (ISOFORMS 1 AND 2)</scope>
</reference>
<feature type="signal peptide" evidence="2">
    <location>
        <begin position="1"/>
        <end position="21"/>
    </location>
</feature>
<feature type="peptide" id="PRO_0000289831" description="Beta-defensin 119">
    <location>
        <begin position="22"/>
        <end position="84"/>
    </location>
</feature>
<feature type="disulfide bond" evidence="1">
    <location>
        <begin position="28"/>
        <end position="55"/>
    </location>
</feature>
<feature type="disulfide bond" evidence="1">
    <location>
        <begin position="35"/>
        <end position="49"/>
    </location>
</feature>
<feature type="disulfide bond" evidence="1">
    <location>
        <begin position="39"/>
        <end position="56"/>
    </location>
</feature>
<feature type="splice variant" id="VSP_029872" description="In isoform 2." evidence="3">
    <original>GKHHILRCMGNSGICRASCKKNEQPYLYCRNYQHCCLQSYMRISISGEEENTDWSYEKQWPRLP</original>
    <variation>VECWMDGHCRLLCKDGEDSIIRCRNRKRCCVPSRYLTIQPVTIHGILGWTTPQMSTTAPKMKRNITNR</variation>
    <location>
        <begin position="21"/>
        <end position="84"/>
    </location>
</feature>